<name>RS3_TROWT</name>
<gene>
    <name evidence="1" type="primary">rpsC</name>
    <name type="ordered locus">TWT_548</name>
</gene>
<keyword id="KW-1185">Reference proteome</keyword>
<keyword id="KW-0687">Ribonucleoprotein</keyword>
<keyword id="KW-0689">Ribosomal protein</keyword>
<keyword id="KW-0694">RNA-binding</keyword>
<keyword id="KW-0699">rRNA-binding</keyword>
<sequence>MGQKINPYGLRLGITTDHVSHWYSDSTRPGQRYADYVSEDIKIRSYLTKTLDRAGIARIEIERTRDRIRVDIYTARPGIVIGRRGAEADRYRLELEKITSKQVQLNILEVKNPETTARLVAQGIAEQLAARVAFRRAMRKGLQSATSAGVRGIRIRLAGRLGGAEISRSEFYIEGQVPLQTLRASIDYGFYEARTPYGHIGVKVWIYKKPSVRGRTEGGG</sequence>
<organism>
    <name type="scientific">Tropheryma whipplei (strain Twist)</name>
    <name type="common">Whipple's bacillus</name>
    <dbReference type="NCBI Taxonomy" id="203267"/>
    <lineage>
        <taxon>Bacteria</taxon>
        <taxon>Bacillati</taxon>
        <taxon>Actinomycetota</taxon>
        <taxon>Actinomycetes</taxon>
        <taxon>Micrococcales</taxon>
        <taxon>Tropherymataceae</taxon>
        <taxon>Tropheryma</taxon>
    </lineage>
</organism>
<comment type="function">
    <text evidence="1">Binds the lower part of the 30S subunit head. Binds mRNA in the 70S ribosome, positioning it for translation.</text>
</comment>
<comment type="subunit">
    <text evidence="1">Part of the 30S ribosomal subunit. Forms a tight complex with proteins S10 and S14.</text>
</comment>
<comment type="similarity">
    <text evidence="1">Belongs to the universal ribosomal protein uS3 family.</text>
</comment>
<feature type="chain" id="PRO_0000130228" description="Small ribosomal subunit protein uS3">
    <location>
        <begin position="1"/>
        <end position="220"/>
    </location>
</feature>
<feature type="domain" description="KH type-2" evidence="1">
    <location>
        <begin position="43"/>
        <end position="111"/>
    </location>
</feature>
<protein>
    <recommendedName>
        <fullName evidence="1">Small ribosomal subunit protein uS3</fullName>
    </recommendedName>
    <alternativeName>
        <fullName evidence="2">30S ribosomal protein S3</fullName>
    </alternativeName>
</protein>
<accession>Q83FZ2</accession>
<evidence type="ECO:0000255" key="1">
    <source>
        <dbReference type="HAMAP-Rule" id="MF_01309"/>
    </source>
</evidence>
<evidence type="ECO:0000305" key="2"/>
<dbReference type="EMBL" id="AE014184">
    <property type="protein sequence ID" value="AAO44645.1"/>
    <property type="molecule type" value="Genomic_DNA"/>
</dbReference>
<dbReference type="RefSeq" id="WP_011096171.1">
    <property type="nucleotide sequence ID" value="NC_004572.3"/>
</dbReference>
<dbReference type="SMR" id="Q83FZ2"/>
<dbReference type="STRING" id="203267.TWT_548"/>
<dbReference type="GeneID" id="67387989"/>
<dbReference type="KEGG" id="twh:TWT_548"/>
<dbReference type="eggNOG" id="COG0092">
    <property type="taxonomic scope" value="Bacteria"/>
</dbReference>
<dbReference type="HOGENOM" id="CLU_058591_0_2_11"/>
<dbReference type="OrthoDB" id="9806396at2"/>
<dbReference type="Proteomes" id="UP000002200">
    <property type="component" value="Chromosome"/>
</dbReference>
<dbReference type="GO" id="GO:0022627">
    <property type="term" value="C:cytosolic small ribosomal subunit"/>
    <property type="evidence" value="ECO:0007669"/>
    <property type="project" value="TreeGrafter"/>
</dbReference>
<dbReference type="GO" id="GO:0003729">
    <property type="term" value="F:mRNA binding"/>
    <property type="evidence" value="ECO:0007669"/>
    <property type="project" value="UniProtKB-UniRule"/>
</dbReference>
<dbReference type="GO" id="GO:0019843">
    <property type="term" value="F:rRNA binding"/>
    <property type="evidence" value="ECO:0007669"/>
    <property type="project" value="UniProtKB-UniRule"/>
</dbReference>
<dbReference type="GO" id="GO:0003735">
    <property type="term" value="F:structural constituent of ribosome"/>
    <property type="evidence" value="ECO:0007669"/>
    <property type="project" value="InterPro"/>
</dbReference>
<dbReference type="GO" id="GO:0006412">
    <property type="term" value="P:translation"/>
    <property type="evidence" value="ECO:0007669"/>
    <property type="project" value="UniProtKB-UniRule"/>
</dbReference>
<dbReference type="CDD" id="cd02412">
    <property type="entry name" value="KH-II_30S_S3"/>
    <property type="match status" value="1"/>
</dbReference>
<dbReference type="FunFam" id="3.30.300.20:FF:000001">
    <property type="entry name" value="30S ribosomal protein S3"/>
    <property type="match status" value="1"/>
</dbReference>
<dbReference type="Gene3D" id="3.30.300.20">
    <property type="match status" value="1"/>
</dbReference>
<dbReference type="Gene3D" id="3.30.1140.32">
    <property type="entry name" value="Ribosomal protein S3, C-terminal domain"/>
    <property type="match status" value="1"/>
</dbReference>
<dbReference type="HAMAP" id="MF_01309_B">
    <property type="entry name" value="Ribosomal_uS3_B"/>
    <property type="match status" value="1"/>
</dbReference>
<dbReference type="InterPro" id="IPR004087">
    <property type="entry name" value="KH_dom"/>
</dbReference>
<dbReference type="InterPro" id="IPR015946">
    <property type="entry name" value="KH_dom-like_a/b"/>
</dbReference>
<dbReference type="InterPro" id="IPR004044">
    <property type="entry name" value="KH_dom_type_2"/>
</dbReference>
<dbReference type="InterPro" id="IPR009019">
    <property type="entry name" value="KH_sf_prok-type"/>
</dbReference>
<dbReference type="InterPro" id="IPR036419">
    <property type="entry name" value="Ribosomal_S3_C_sf"/>
</dbReference>
<dbReference type="InterPro" id="IPR005704">
    <property type="entry name" value="Ribosomal_uS3_bac-typ"/>
</dbReference>
<dbReference type="InterPro" id="IPR001351">
    <property type="entry name" value="Ribosomal_uS3_C"/>
</dbReference>
<dbReference type="InterPro" id="IPR018280">
    <property type="entry name" value="Ribosomal_uS3_CS"/>
</dbReference>
<dbReference type="NCBIfam" id="TIGR01009">
    <property type="entry name" value="rpsC_bact"/>
    <property type="match status" value="1"/>
</dbReference>
<dbReference type="PANTHER" id="PTHR11760">
    <property type="entry name" value="30S/40S RIBOSOMAL PROTEIN S3"/>
    <property type="match status" value="1"/>
</dbReference>
<dbReference type="PANTHER" id="PTHR11760:SF19">
    <property type="entry name" value="SMALL RIBOSOMAL SUBUNIT PROTEIN US3C"/>
    <property type="match status" value="1"/>
</dbReference>
<dbReference type="Pfam" id="PF07650">
    <property type="entry name" value="KH_2"/>
    <property type="match status" value="1"/>
</dbReference>
<dbReference type="Pfam" id="PF00189">
    <property type="entry name" value="Ribosomal_S3_C"/>
    <property type="match status" value="1"/>
</dbReference>
<dbReference type="SMART" id="SM00322">
    <property type="entry name" value="KH"/>
    <property type="match status" value="1"/>
</dbReference>
<dbReference type="SUPFAM" id="SSF54814">
    <property type="entry name" value="Prokaryotic type KH domain (KH-domain type II)"/>
    <property type="match status" value="1"/>
</dbReference>
<dbReference type="SUPFAM" id="SSF54821">
    <property type="entry name" value="Ribosomal protein S3 C-terminal domain"/>
    <property type="match status" value="1"/>
</dbReference>
<dbReference type="PROSITE" id="PS50823">
    <property type="entry name" value="KH_TYPE_2"/>
    <property type="match status" value="1"/>
</dbReference>
<dbReference type="PROSITE" id="PS00548">
    <property type="entry name" value="RIBOSOMAL_S3"/>
    <property type="match status" value="1"/>
</dbReference>
<proteinExistence type="inferred from homology"/>
<reference key="1">
    <citation type="journal article" date="2003" name="Genome Res.">
        <title>Tropheryma whipplei twist: a human pathogenic Actinobacteria with a reduced genome.</title>
        <authorList>
            <person name="Raoult D."/>
            <person name="Ogata H."/>
            <person name="Audic S."/>
            <person name="Robert C."/>
            <person name="Suhre K."/>
            <person name="Drancourt M."/>
            <person name="Claverie J.-M."/>
        </authorList>
    </citation>
    <scope>NUCLEOTIDE SEQUENCE [LARGE SCALE GENOMIC DNA]</scope>
    <source>
        <strain>Twist</strain>
    </source>
</reference>